<reference key="1">
    <citation type="journal article" date="2011" name="Genome Biol.">
        <title>Comparative and functional genomics provide insights into the pathogenicity of dermatophytic fungi.</title>
        <authorList>
            <person name="Burmester A."/>
            <person name="Shelest E."/>
            <person name="Gloeckner G."/>
            <person name="Heddergott C."/>
            <person name="Schindler S."/>
            <person name="Staib P."/>
            <person name="Heidel A."/>
            <person name="Felder M."/>
            <person name="Petzold A."/>
            <person name="Szafranski K."/>
            <person name="Feuermann M."/>
            <person name="Pedruzzi I."/>
            <person name="Priebe S."/>
            <person name="Groth M."/>
            <person name="Winkler R."/>
            <person name="Li W."/>
            <person name="Kniemeyer O."/>
            <person name="Schroeckh V."/>
            <person name="Hertweck C."/>
            <person name="Hube B."/>
            <person name="White T.C."/>
            <person name="Platzer M."/>
            <person name="Guthke R."/>
            <person name="Heitman J."/>
            <person name="Woestemeyer J."/>
            <person name="Zipfel P.F."/>
            <person name="Monod M."/>
            <person name="Brakhage A.A."/>
        </authorList>
    </citation>
    <scope>NUCLEOTIDE SEQUENCE [LARGE SCALE GENOMIC DNA]</scope>
    <source>
        <strain>ATCC MYA-4681 / CBS 112371</strain>
    </source>
</reference>
<reference key="2">
    <citation type="journal article" date="2012" name="Microbiology">
        <title>Genome mining reveals the presence of a conserved gene cluster for the biosynthesis of ergot alkaloid precursors in the fungal family Arthrodermataceae.</title>
        <authorList>
            <person name="Wallwey C."/>
            <person name="Heddergott C."/>
            <person name="Xie X."/>
            <person name="Brakhage A.A."/>
            <person name="Li S.M."/>
        </authorList>
    </citation>
    <scope>FUNCTION</scope>
</reference>
<accession>D4AK46</accession>
<protein>
    <recommendedName>
        <fullName evidence="1">4-dimethylallyltryptophan N-methyltransferase easF</fullName>
        <ecNumber evidence="1">2.1.1.261</ecNumber>
    </recommendedName>
    <alternativeName>
        <fullName evidence="1">4-dimethylallyltryptophan methyltransferase</fullName>
    </alternativeName>
    <alternativeName>
        <fullName evidence="3">Ergot alkaloid synthesis protein F</fullName>
    </alternativeName>
</protein>
<comment type="function">
    <text evidence="2">4-dimethylallyltryptophan N-methyltransferase; part of the gene cluster that mediates the biosynthesis of fungal ergot alkaloid (PubMed:22403186). DmaW catalyzes the first step of ergot alkaloid biosynthesis by condensing dimethylallyl diphosphate (DMAP) and tryptophan to form 4-dimethylallyl-L-tryptophan (PubMed:22403186). The second step is catalyzed by the methyltransferase easF that methylates 4-dimethylallyl-L-tryptophan in the presence of S-adenosyl-L-methionine, resulting in the formation of 4-dimethylallyl-L-abrine (PubMed:22403186). The catalase easC and the FAD-dependent oxidoreductase easE then transform 4-dimethylallyl-L-abrine to chanoclavine-I which is further oxidized by easD in the presence of NAD(+), resulting in the formation of chanoclavine-I aldehyde (PubMed:22403186). Chanoclavine-I aldehyde is the precursor of ergoamides and ergopeptines in Clavicipitaceae, and clavine-type alcaloids such as fumiclavine in Trichocomaceae (PubMed:22403186). However, the metabolites downstream of chanoclavine-I aldehyde in Arthrodermataceae have not been identified yet (PubMed:22403186).</text>
</comment>
<comment type="catalytic activity">
    <reaction evidence="1">
        <text>4-(3-methylbut-2-enyl)-L-tryptophan + S-adenosyl-L-methionine = 4-(3-methylbut-2-enyl)-L-abrine + S-adenosyl-L-homocysteine + H(+)</text>
        <dbReference type="Rhea" id="RHEA:34435"/>
        <dbReference type="ChEBI" id="CHEBI:15378"/>
        <dbReference type="ChEBI" id="CHEBI:57856"/>
        <dbReference type="ChEBI" id="CHEBI:58209"/>
        <dbReference type="ChEBI" id="CHEBI:59789"/>
        <dbReference type="ChEBI" id="CHEBI:67248"/>
        <dbReference type="EC" id="2.1.1.261"/>
    </reaction>
</comment>
<comment type="pathway">
    <text evidence="5">Alkaloid biosynthesis; ergot alkaloid biosynthesis.</text>
</comment>
<comment type="subunit">
    <text evidence="1">Homodimer.</text>
</comment>
<comment type="similarity">
    <text evidence="4">Belongs to the methyltransferase superfamily.</text>
</comment>
<proteinExistence type="inferred from homology"/>
<gene>
    <name evidence="3" type="primary">easF</name>
    <name type="ORF">ARB_04647</name>
</gene>
<feature type="chain" id="PRO_0000439138" description="4-dimethylallyltryptophan N-methyltransferase easF">
    <location>
        <begin position="1"/>
        <end position="340"/>
    </location>
</feature>
<organism>
    <name type="scientific">Arthroderma benhamiae (strain ATCC MYA-4681 / CBS 112371)</name>
    <name type="common">Trichophyton mentagrophytes</name>
    <dbReference type="NCBI Taxonomy" id="663331"/>
    <lineage>
        <taxon>Eukaryota</taxon>
        <taxon>Fungi</taxon>
        <taxon>Dikarya</taxon>
        <taxon>Ascomycota</taxon>
        <taxon>Pezizomycotina</taxon>
        <taxon>Eurotiomycetes</taxon>
        <taxon>Eurotiomycetidae</taxon>
        <taxon>Onygenales</taxon>
        <taxon>Arthrodermataceae</taxon>
        <taxon>Trichophyton</taxon>
    </lineage>
</organism>
<sequence length="340" mass="38039">MGSINPPQILDIRRSKFEESIPKQVEAGLLSSPKTLPALLFYSTEGIQHWNRHSHASDFYPRHEEIQILKDKATDMAASIADGSVVVDLGSASLDKVIHLLEALEAAQKKVTYYALDLSFSELTSTLQAIPTDQFVHVQFSALHGTFDDGLQWLKETPVIRDQPHCLLLFGLTIGNFSRSNAAKFLHNIASHALVESPSQSSILLTLDSCKVPTKVTRAYTAEGVVPFALESLKYGNTLFQQDGGENVFDPEDWYFLSEWNYVLGRHEASLVPRSKDIKLGRPLDKIVVGKHEKVRFGCSYKYDSEERKELFGTAGLRDVKSWSKEGCDVAFYQLKCCPN</sequence>
<name>EASF_ARTBC</name>
<keyword id="KW-0017">Alkaloid metabolism</keyword>
<keyword id="KW-0489">Methyltransferase</keyword>
<keyword id="KW-1185">Reference proteome</keyword>
<keyword id="KW-0949">S-adenosyl-L-methionine</keyword>
<keyword id="KW-0808">Transferase</keyword>
<dbReference type="EC" id="2.1.1.261" evidence="1"/>
<dbReference type="EMBL" id="ABSU01000001">
    <property type="protein sequence ID" value="EFE37119.1"/>
    <property type="molecule type" value="Genomic_DNA"/>
</dbReference>
<dbReference type="RefSeq" id="XP_003017764.1">
    <property type="nucleotide sequence ID" value="XM_003017718.1"/>
</dbReference>
<dbReference type="SMR" id="D4AK46"/>
<dbReference type="STRING" id="663331.D4AK46"/>
<dbReference type="GeneID" id="9522610"/>
<dbReference type="KEGG" id="abe:ARB_04647"/>
<dbReference type="eggNOG" id="ENOG502SISP">
    <property type="taxonomic scope" value="Eukaryota"/>
</dbReference>
<dbReference type="HOGENOM" id="CLU_049766_0_0_1"/>
<dbReference type="OMA" id="FGCSYKY"/>
<dbReference type="OrthoDB" id="659at2759"/>
<dbReference type="UniPathway" id="UPA00327"/>
<dbReference type="Proteomes" id="UP000008866">
    <property type="component" value="Unassembled WGS sequence"/>
</dbReference>
<dbReference type="GO" id="GO:0008168">
    <property type="term" value="F:methyltransferase activity"/>
    <property type="evidence" value="ECO:0007669"/>
    <property type="project" value="UniProtKB-KW"/>
</dbReference>
<dbReference type="GO" id="GO:0035835">
    <property type="term" value="P:indole alkaloid biosynthetic process"/>
    <property type="evidence" value="ECO:0007669"/>
    <property type="project" value="UniProtKB-UniPathway"/>
</dbReference>
<dbReference type="GO" id="GO:0032259">
    <property type="term" value="P:methylation"/>
    <property type="evidence" value="ECO:0007669"/>
    <property type="project" value="UniProtKB-KW"/>
</dbReference>
<dbReference type="Gene3D" id="3.40.50.150">
    <property type="entry name" value="Vaccinia Virus protein VP39"/>
    <property type="match status" value="1"/>
</dbReference>
<dbReference type="InterPro" id="IPR051128">
    <property type="entry name" value="EgtD_Methyltrsf_superfamily"/>
</dbReference>
<dbReference type="InterPro" id="IPR019257">
    <property type="entry name" value="MeTrfase_dom"/>
</dbReference>
<dbReference type="InterPro" id="IPR017804">
    <property type="entry name" value="MeTrfase_EgtD-like"/>
</dbReference>
<dbReference type="InterPro" id="IPR029063">
    <property type="entry name" value="SAM-dependent_MTases_sf"/>
</dbReference>
<dbReference type="InterPro" id="IPR017805">
    <property type="entry name" value="SAM_MeTrfase_EasF-type_put"/>
</dbReference>
<dbReference type="NCBIfam" id="TIGR03439">
    <property type="entry name" value="methyl_EasF"/>
    <property type="match status" value="1"/>
</dbReference>
<dbReference type="PANTHER" id="PTHR43397">
    <property type="entry name" value="ERGOTHIONEINE BIOSYNTHESIS PROTEIN 1"/>
    <property type="match status" value="1"/>
</dbReference>
<dbReference type="PANTHER" id="PTHR43397:SF1">
    <property type="entry name" value="ERGOTHIONEINE BIOSYNTHESIS PROTEIN 1"/>
    <property type="match status" value="1"/>
</dbReference>
<dbReference type="Pfam" id="PF10017">
    <property type="entry name" value="Methyltransf_33"/>
    <property type="match status" value="1"/>
</dbReference>
<dbReference type="PIRSF" id="PIRSF018005">
    <property type="entry name" value="UCP018005"/>
    <property type="match status" value="1"/>
</dbReference>
<evidence type="ECO:0000250" key="1">
    <source>
        <dbReference type="UniProtKB" id="B6D5I7"/>
    </source>
</evidence>
<evidence type="ECO:0000269" key="2">
    <source>
    </source>
</evidence>
<evidence type="ECO:0000303" key="3">
    <source>
    </source>
</evidence>
<evidence type="ECO:0000305" key="4"/>
<evidence type="ECO:0000305" key="5">
    <source>
    </source>
</evidence>